<gene>
    <name evidence="6" type="ORF">SAM23877_0645</name>
    <name evidence="7" type="ORF">SAML0570</name>
</gene>
<accession>A3KIM2</accession>
<keyword id="KW-0119">Carbohydrate metabolism</keyword>
<keyword id="KW-0146">Chitin degradation</keyword>
<keyword id="KW-0147">Chitin-binding</keyword>
<keyword id="KW-0186">Copper</keyword>
<keyword id="KW-0479">Metal-binding</keyword>
<keyword id="KW-0560">Oxidoreductase</keyword>
<keyword id="KW-0624">Polysaccharide degradation</keyword>
<keyword id="KW-0964">Secreted</keyword>
<keyword id="KW-0732">Signal</keyword>
<sequence>MHAGRKTAVLIGAALAPVIAVSLPAASASAHGYISNPPSRQAQCAAGTVSCGDITYEPQSVEGPKGLTSCSGGNSRFAELDDDSKGWAVTPVPRNATFSWKLTAQHSTSTWEYYVGGQRIALFDDGGAKPGAVVDHQVDFGGLDGRQKVLAVWNVADTDNAFYACIDVNVGG</sequence>
<evidence type="ECO:0000250" key="1">
    <source>
        <dbReference type="UniProtKB" id="Q838S1"/>
    </source>
</evidence>
<evidence type="ECO:0000255" key="2"/>
<evidence type="ECO:0000269" key="3">
    <source>
    </source>
</evidence>
<evidence type="ECO:0000303" key="4">
    <source>
    </source>
</evidence>
<evidence type="ECO:0000305" key="5">
    <source>
    </source>
</evidence>
<evidence type="ECO:0000312" key="6">
    <source>
        <dbReference type="EMBL" id="AKZ53694.1"/>
    </source>
</evidence>
<evidence type="ECO:0000312" key="7">
    <source>
        <dbReference type="EMBL" id="CAJ89556.1"/>
    </source>
</evidence>
<organism>
    <name type="scientific">Streptomyces ambofaciens (strain ATCC 23877 / 3486 / DSM 40053 / JCM 4204 / NBRC 12836 / NRRL B-2516)</name>
    <dbReference type="NCBI Taxonomy" id="278992"/>
    <lineage>
        <taxon>Bacteria</taxon>
        <taxon>Bacillati</taxon>
        <taxon>Actinomycetota</taxon>
        <taxon>Actinomycetes</taxon>
        <taxon>Kitasatosporales</taxon>
        <taxon>Streptomycetaceae</taxon>
        <taxon>Streptomyces</taxon>
    </lineage>
</organism>
<dbReference type="EC" id="1.14.99.53" evidence="3"/>
<dbReference type="EMBL" id="CP012382">
    <property type="protein sequence ID" value="AKZ53694.1"/>
    <property type="molecule type" value="Genomic_DNA"/>
</dbReference>
<dbReference type="EMBL" id="AM238663">
    <property type="protein sequence ID" value="CAJ89556.1"/>
    <property type="molecule type" value="Genomic_DNA"/>
</dbReference>
<dbReference type="RefSeq" id="WP_053126548.1">
    <property type="nucleotide sequence ID" value="NZ_CP012382.1"/>
</dbReference>
<dbReference type="SMR" id="A3KIM2"/>
<dbReference type="STRING" id="1889.SAM40697_0535"/>
<dbReference type="CAZy" id="AA10">
    <property type="family name" value="Auxiliary Activities 10"/>
</dbReference>
<dbReference type="KEGG" id="samb:SAM23877_0645"/>
<dbReference type="UniPathway" id="UPA00349"/>
<dbReference type="Proteomes" id="UP000061018">
    <property type="component" value="Chromosome"/>
</dbReference>
<dbReference type="GO" id="GO:0005576">
    <property type="term" value="C:extracellular region"/>
    <property type="evidence" value="ECO:0007669"/>
    <property type="project" value="UniProtKB-SubCell"/>
</dbReference>
<dbReference type="GO" id="GO:0008061">
    <property type="term" value="F:chitin binding"/>
    <property type="evidence" value="ECO:0000314"/>
    <property type="project" value="UniProtKB"/>
</dbReference>
<dbReference type="GO" id="GO:0005507">
    <property type="term" value="F:copper ion binding"/>
    <property type="evidence" value="ECO:0000250"/>
    <property type="project" value="UniProtKB"/>
</dbReference>
<dbReference type="GO" id="GO:0004497">
    <property type="term" value="F:monooxygenase activity"/>
    <property type="evidence" value="ECO:0000314"/>
    <property type="project" value="UniProtKB"/>
</dbReference>
<dbReference type="GO" id="GO:0006032">
    <property type="term" value="P:chitin catabolic process"/>
    <property type="evidence" value="ECO:0000314"/>
    <property type="project" value="UniProtKB"/>
</dbReference>
<dbReference type="GO" id="GO:0000272">
    <property type="term" value="P:polysaccharide catabolic process"/>
    <property type="evidence" value="ECO:0007669"/>
    <property type="project" value="UniProtKB-KW"/>
</dbReference>
<dbReference type="CDD" id="cd21177">
    <property type="entry name" value="LPMO_AA10"/>
    <property type="match status" value="1"/>
</dbReference>
<dbReference type="FunFam" id="2.70.50.50:FF:000004">
    <property type="entry name" value="Chitin binding protein"/>
    <property type="match status" value="1"/>
</dbReference>
<dbReference type="Gene3D" id="2.70.50.50">
    <property type="entry name" value="chitin-binding protein cbp21"/>
    <property type="match status" value="1"/>
</dbReference>
<dbReference type="InterPro" id="IPR004302">
    <property type="entry name" value="Cellulose/chitin-bd_N"/>
</dbReference>
<dbReference type="InterPro" id="IPR051024">
    <property type="entry name" value="GlcNAc_Chitin_IntDeg"/>
</dbReference>
<dbReference type="InterPro" id="IPR014756">
    <property type="entry name" value="Ig_E-set"/>
</dbReference>
<dbReference type="PANTHER" id="PTHR34823:SF1">
    <property type="entry name" value="CHITIN-BINDING TYPE-4 DOMAIN-CONTAINING PROTEIN"/>
    <property type="match status" value="1"/>
</dbReference>
<dbReference type="PANTHER" id="PTHR34823">
    <property type="entry name" value="GLCNAC-BINDING PROTEIN A"/>
    <property type="match status" value="1"/>
</dbReference>
<dbReference type="Pfam" id="PF03067">
    <property type="entry name" value="LPMO_10"/>
    <property type="match status" value="1"/>
</dbReference>
<dbReference type="SUPFAM" id="SSF81296">
    <property type="entry name" value="E set domains"/>
    <property type="match status" value="1"/>
</dbReference>
<name>LCHMO_STRA7</name>
<comment type="function">
    <text evidence="3">Involved in chitin degradation. Catalyzes the oxidative cleavage of glycosidic bonds in chitin via a copper-dependent mechanism, leading to oxidized chitooligomers with degrees of polymerization of 4-6. Is not active on cellulose.</text>
</comment>
<comment type="catalytic activity">
    <reaction evidence="3">
        <text>[(1-&gt;4)-N-acetyl-beta-D-glucosaminyl]n+m + reduced acceptor + O2 = [(1-&gt;4)-N-acetyl-beta-D-glucosaminyl]m-1-(1-&gt;4)-2-(acetylamino)-2-deoxy-D-glucono-1,5-lactone + [(1-&gt;4)-N-acetyl-beta-D-glucosaminyl]n + acceptor + H2O.</text>
        <dbReference type="EC" id="1.14.99.53"/>
    </reaction>
</comment>
<comment type="cofactor">
    <cofactor evidence="5">
        <name>Cu(2+)</name>
        <dbReference type="ChEBI" id="CHEBI:29036"/>
    </cofactor>
</comment>
<comment type="pathway">
    <text evidence="3">Glycan degradation; chitin degradation.</text>
</comment>
<comment type="subcellular location">
    <subcellularLocation>
        <location evidence="5">Secreted</location>
    </subcellularLocation>
</comment>
<proteinExistence type="evidence at protein level"/>
<reference key="1">
    <citation type="journal article" date="2006" name="Mol. Biol. Evol.">
        <title>Evolution of the terminal regions of the Streptomyces linear chromosome.</title>
        <authorList>
            <person name="Choulet F."/>
            <person name="Aigle B."/>
            <person name="Gallois A."/>
            <person name="Mangenot S."/>
            <person name="Gerbaud C."/>
            <person name="Truong C."/>
            <person name="Francou F.-X."/>
            <person name="Fourrier C."/>
            <person name="Guerineau M."/>
            <person name="Decaris B."/>
            <person name="Barbe V."/>
            <person name="Pernodet J.-L."/>
            <person name="Leblond P."/>
        </authorList>
    </citation>
    <scope>NUCLEOTIDE SEQUENCE [GENOMIC DNA]</scope>
    <source>
        <strain>ATCC 23877 / 3486 / DSM 40053 / JCM 4204 / NBRC 12836 / NRRL B-2516</strain>
    </source>
</reference>
<reference key="2">
    <citation type="journal article" date="2015" name="J. Biotechnol.">
        <title>Complete genome sequence of Streptomyces ambofaciens ATCC 23877, the spiramycin producer.</title>
        <authorList>
            <person name="Thibessard A."/>
            <person name="Haas D."/>
            <person name="Gerbaud C."/>
            <person name="Aigle B."/>
            <person name="Lautru S."/>
            <person name="Pernodet J.L."/>
            <person name="Leblond P."/>
        </authorList>
    </citation>
    <scope>NUCLEOTIDE SEQUENCE [LARGE SCALE GENOMIC DNA]</scope>
    <source>
        <strain>ATCC 23877 / 3486 / DSM 40053 / JCM 4204 / NBRC 12836 / NRRL B-2516</strain>
    </source>
</reference>
<reference key="3">
    <citation type="journal article" date="2017" name="Carbohydr. Res.">
        <title>Fast purification method of functional LPMOs from Streptomyces ambofaciens by affinity adsorption.</title>
        <authorList>
            <person name="Valenzuela S.V."/>
            <person name="Ferreres G."/>
            <person name="Margalef G."/>
            <person name="Pastor F.I.J."/>
        </authorList>
    </citation>
    <scope>FUNCTION</scope>
    <scope>CATALYTIC ACTIVITY</scope>
    <scope>COFACTOR</scope>
    <scope>SUBSTRATE SPECIFICITY</scope>
    <scope>PATHWAY</scope>
</reference>
<feature type="signal peptide" evidence="2">
    <location>
        <begin position="1"/>
        <end position="30"/>
    </location>
</feature>
<feature type="chain" id="PRO_5011202451" description="Lytic chitin monooxygenase">
    <location>
        <begin position="31"/>
        <end position="172"/>
    </location>
</feature>
<feature type="domain" description="Chitin-binding type-4" evidence="2">
    <location>
        <begin position="31"/>
        <end position="168"/>
    </location>
</feature>
<feature type="binding site" evidence="1">
    <location>
        <position position="31"/>
    </location>
    <ligand>
        <name>Cu cation</name>
        <dbReference type="ChEBI" id="CHEBI:23378"/>
    </ligand>
</feature>
<feature type="binding site" evidence="1">
    <location>
        <position position="106"/>
    </location>
    <ligand>
        <name>Cu cation</name>
        <dbReference type="ChEBI" id="CHEBI:23378"/>
    </ligand>
</feature>
<protein>
    <recommendedName>
        <fullName evidence="5">Lytic chitin monooxygenase</fullName>
        <ecNumber evidence="3">1.14.99.53</ecNumber>
    </recommendedName>
    <alternativeName>
        <fullName evidence="4">Lytic polysaccharide monooxygenase</fullName>
        <shortName evidence="4">LPMO</shortName>
    </alternativeName>
    <alternativeName>
        <fullName evidence="4">SamLPMO10B</fullName>
    </alternativeName>
</protein>